<organism>
    <name type="scientific">Ralstonia pickettii (strain 12J)</name>
    <dbReference type="NCBI Taxonomy" id="402626"/>
    <lineage>
        <taxon>Bacteria</taxon>
        <taxon>Pseudomonadati</taxon>
        <taxon>Pseudomonadota</taxon>
        <taxon>Betaproteobacteria</taxon>
        <taxon>Burkholderiales</taxon>
        <taxon>Burkholderiaceae</taxon>
        <taxon>Ralstonia</taxon>
    </lineage>
</organism>
<protein>
    <recommendedName>
        <fullName evidence="1">Ribosomal protein L11 methyltransferase</fullName>
        <shortName evidence="1">L11 Mtase</shortName>
        <ecNumber evidence="1">2.1.1.-</ecNumber>
    </recommendedName>
</protein>
<evidence type="ECO:0000255" key="1">
    <source>
        <dbReference type="HAMAP-Rule" id="MF_00735"/>
    </source>
</evidence>
<comment type="function">
    <text evidence="1">Methylates ribosomal protein L11.</text>
</comment>
<comment type="catalytic activity">
    <reaction evidence="1">
        <text>L-lysyl-[protein] + 3 S-adenosyl-L-methionine = N(6),N(6),N(6)-trimethyl-L-lysyl-[protein] + 3 S-adenosyl-L-homocysteine + 3 H(+)</text>
        <dbReference type="Rhea" id="RHEA:54192"/>
        <dbReference type="Rhea" id="RHEA-COMP:9752"/>
        <dbReference type="Rhea" id="RHEA-COMP:13826"/>
        <dbReference type="ChEBI" id="CHEBI:15378"/>
        <dbReference type="ChEBI" id="CHEBI:29969"/>
        <dbReference type="ChEBI" id="CHEBI:57856"/>
        <dbReference type="ChEBI" id="CHEBI:59789"/>
        <dbReference type="ChEBI" id="CHEBI:61961"/>
    </reaction>
</comment>
<comment type="subcellular location">
    <subcellularLocation>
        <location evidence="1">Cytoplasm</location>
    </subcellularLocation>
</comment>
<comment type="similarity">
    <text evidence="1">Belongs to the methyltransferase superfamily. PrmA family.</text>
</comment>
<sequence length="298" mass="32304">MTYRECVLEVARDDAEALSEALFDLGALSVSVEDADADTPEEQPLFGEPGHEPTRLAWNRSRVVALLAEDADPALLVAAAANEINLSPLPAYTVREVEEQDWVRVTQSQFEPIHIGEHIWVVPSWHDAPEPDAVVLELDPGLAFGTGSHPTTRLCMEWLEQHVHPGERTLDYGCGSGILAIVAKKLGAGETVGVDIDPNAVEASRYNAERNHVEATFALPDDAPEGTFDLVVANILSNPLKLMAAMLCARVRPGGRLILSGVLERQAEEVAAAYASTIPLTVWRARDGWVCLHGVKPT</sequence>
<gene>
    <name evidence="1" type="primary">prmA</name>
    <name type="ordered locus">Rpic_3033</name>
</gene>
<keyword id="KW-0963">Cytoplasm</keyword>
<keyword id="KW-0489">Methyltransferase</keyword>
<keyword id="KW-0949">S-adenosyl-L-methionine</keyword>
<keyword id="KW-0808">Transferase</keyword>
<name>PRMA_RALPJ</name>
<accession>B2UCS1</accession>
<reference key="1">
    <citation type="submission" date="2008-05" db="EMBL/GenBank/DDBJ databases">
        <title>Complete sequence of chromosome 1 of Ralstonia pickettii 12J.</title>
        <authorList>
            <person name="Lucas S."/>
            <person name="Copeland A."/>
            <person name="Lapidus A."/>
            <person name="Glavina del Rio T."/>
            <person name="Dalin E."/>
            <person name="Tice H."/>
            <person name="Bruce D."/>
            <person name="Goodwin L."/>
            <person name="Pitluck S."/>
            <person name="Meincke L."/>
            <person name="Brettin T."/>
            <person name="Detter J.C."/>
            <person name="Han C."/>
            <person name="Kuske C.R."/>
            <person name="Schmutz J."/>
            <person name="Larimer F."/>
            <person name="Land M."/>
            <person name="Hauser L."/>
            <person name="Kyrpides N."/>
            <person name="Mikhailova N."/>
            <person name="Marsh T."/>
            <person name="Richardson P."/>
        </authorList>
    </citation>
    <scope>NUCLEOTIDE SEQUENCE [LARGE SCALE GENOMIC DNA]</scope>
    <source>
        <strain>12J</strain>
    </source>
</reference>
<dbReference type="EC" id="2.1.1.-" evidence="1"/>
<dbReference type="EMBL" id="CP001068">
    <property type="protein sequence ID" value="ACD28156.1"/>
    <property type="molecule type" value="Genomic_DNA"/>
</dbReference>
<dbReference type="SMR" id="B2UCS1"/>
<dbReference type="STRING" id="402626.Rpic_3033"/>
<dbReference type="KEGG" id="rpi:Rpic_3033"/>
<dbReference type="PATRIC" id="fig|402626.5.peg.4168"/>
<dbReference type="eggNOG" id="COG2264">
    <property type="taxonomic scope" value="Bacteria"/>
</dbReference>
<dbReference type="HOGENOM" id="CLU_049382_4_1_4"/>
<dbReference type="GO" id="GO:0005829">
    <property type="term" value="C:cytosol"/>
    <property type="evidence" value="ECO:0007669"/>
    <property type="project" value="TreeGrafter"/>
</dbReference>
<dbReference type="GO" id="GO:0016279">
    <property type="term" value="F:protein-lysine N-methyltransferase activity"/>
    <property type="evidence" value="ECO:0007669"/>
    <property type="project" value="TreeGrafter"/>
</dbReference>
<dbReference type="GO" id="GO:0032259">
    <property type="term" value="P:methylation"/>
    <property type="evidence" value="ECO:0007669"/>
    <property type="project" value="UniProtKB-KW"/>
</dbReference>
<dbReference type="CDD" id="cd02440">
    <property type="entry name" value="AdoMet_MTases"/>
    <property type="match status" value="1"/>
</dbReference>
<dbReference type="Gene3D" id="3.40.50.150">
    <property type="entry name" value="Vaccinia Virus protein VP39"/>
    <property type="match status" value="1"/>
</dbReference>
<dbReference type="HAMAP" id="MF_00735">
    <property type="entry name" value="Methyltr_PrmA"/>
    <property type="match status" value="1"/>
</dbReference>
<dbReference type="InterPro" id="IPR050078">
    <property type="entry name" value="Ribosomal_L11_MeTrfase_PrmA"/>
</dbReference>
<dbReference type="InterPro" id="IPR004498">
    <property type="entry name" value="Ribosomal_PrmA_MeTrfase"/>
</dbReference>
<dbReference type="InterPro" id="IPR029063">
    <property type="entry name" value="SAM-dependent_MTases_sf"/>
</dbReference>
<dbReference type="NCBIfam" id="TIGR00406">
    <property type="entry name" value="prmA"/>
    <property type="match status" value="1"/>
</dbReference>
<dbReference type="PANTHER" id="PTHR43648">
    <property type="entry name" value="ELECTRON TRANSFER FLAVOPROTEIN BETA SUBUNIT LYSINE METHYLTRANSFERASE"/>
    <property type="match status" value="1"/>
</dbReference>
<dbReference type="PANTHER" id="PTHR43648:SF1">
    <property type="entry name" value="ELECTRON TRANSFER FLAVOPROTEIN BETA SUBUNIT LYSINE METHYLTRANSFERASE"/>
    <property type="match status" value="1"/>
</dbReference>
<dbReference type="Pfam" id="PF06325">
    <property type="entry name" value="PrmA"/>
    <property type="match status" value="1"/>
</dbReference>
<dbReference type="PIRSF" id="PIRSF000401">
    <property type="entry name" value="RPL11_MTase"/>
    <property type="match status" value="1"/>
</dbReference>
<dbReference type="SUPFAM" id="SSF53335">
    <property type="entry name" value="S-adenosyl-L-methionine-dependent methyltransferases"/>
    <property type="match status" value="1"/>
</dbReference>
<proteinExistence type="inferred from homology"/>
<feature type="chain" id="PRO_1000192653" description="Ribosomal protein L11 methyltransferase">
    <location>
        <begin position="1"/>
        <end position="298"/>
    </location>
</feature>
<feature type="binding site" evidence="1">
    <location>
        <position position="152"/>
    </location>
    <ligand>
        <name>S-adenosyl-L-methionine</name>
        <dbReference type="ChEBI" id="CHEBI:59789"/>
    </ligand>
</feature>
<feature type="binding site" evidence="1">
    <location>
        <position position="173"/>
    </location>
    <ligand>
        <name>S-adenosyl-L-methionine</name>
        <dbReference type="ChEBI" id="CHEBI:59789"/>
    </ligand>
</feature>
<feature type="binding site" evidence="1">
    <location>
        <position position="195"/>
    </location>
    <ligand>
        <name>S-adenosyl-L-methionine</name>
        <dbReference type="ChEBI" id="CHEBI:59789"/>
    </ligand>
</feature>
<feature type="binding site" evidence="1">
    <location>
        <position position="234"/>
    </location>
    <ligand>
        <name>S-adenosyl-L-methionine</name>
        <dbReference type="ChEBI" id="CHEBI:59789"/>
    </ligand>
</feature>